<sequence length="257" mass="26485">MSVPLILTILAGAATFIGAFLGVLGQKPSNRLLAFSLGFAAGIMLLISLMEMLPAALAAEGMSPVLGYGMFIFGLLGYFGLDRMLPHAHPQDLMQKSVQPLPKSIKRTAILLTLGISLHNFPEGIATFVTASSNLELGFGIALAVALHNIPEGLAVAGPVYAATGSKRTAILWAGISGLAEILGGVLAWLILGSMISPVVMAAIMAAVAGIMVALSVDELMPLAKEIDPNNNPSYGVLCGMSVMGFSLVLLQTAGIG</sequence>
<organism>
    <name type="scientific">Escherichia coli O6:K15:H31 (strain 536 / UPEC)</name>
    <dbReference type="NCBI Taxonomy" id="362663"/>
    <lineage>
        <taxon>Bacteria</taxon>
        <taxon>Pseudomonadati</taxon>
        <taxon>Pseudomonadota</taxon>
        <taxon>Gammaproteobacteria</taxon>
        <taxon>Enterobacterales</taxon>
        <taxon>Enterobacteriaceae</taxon>
        <taxon>Escherichia</taxon>
    </lineage>
</organism>
<reference key="1">
    <citation type="journal article" date="2006" name="Mol. Microbiol.">
        <title>Role of pathogenicity island-associated integrases in the genome plasticity of uropathogenic Escherichia coli strain 536.</title>
        <authorList>
            <person name="Hochhut B."/>
            <person name="Wilde C."/>
            <person name="Balling G."/>
            <person name="Middendorf B."/>
            <person name="Dobrindt U."/>
            <person name="Brzuszkiewicz E."/>
            <person name="Gottschalk G."/>
            <person name="Carniel E."/>
            <person name="Hacker J."/>
        </authorList>
    </citation>
    <scope>NUCLEOTIDE SEQUENCE [LARGE SCALE GENOMIC DNA]</scope>
    <source>
        <strain>536 / UPEC</strain>
    </source>
</reference>
<comment type="function">
    <text evidence="1">Mediates zinc uptake. May also transport other divalent cations.</text>
</comment>
<comment type="catalytic activity">
    <reaction evidence="1">
        <text>Zn(2+)(in) = Zn(2+)(out)</text>
        <dbReference type="Rhea" id="RHEA:29351"/>
        <dbReference type="ChEBI" id="CHEBI:29105"/>
    </reaction>
</comment>
<comment type="subcellular location">
    <subcellularLocation>
        <location evidence="1">Cell inner membrane</location>
        <topology evidence="1">Multi-pass membrane protein</topology>
    </subcellularLocation>
</comment>
<comment type="similarity">
    <text evidence="1">Belongs to the ZIP transporter (TC 2.A.5) family. ZupT subfamily.</text>
</comment>
<name>ZUPT_ECOL5</name>
<proteinExistence type="inferred from homology"/>
<protein>
    <recommendedName>
        <fullName evidence="1">Zinc transporter ZupT</fullName>
    </recommendedName>
</protein>
<gene>
    <name evidence="1" type="primary">zupT</name>
    <name type="ordered locus">ECP_3134</name>
</gene>
<dbReference type="EMBL" id="CP000247">
    <property type="protein sequence ID" value="ABG71117.1"/>
    <property type="molecule type" value="Genomic_DNA"/>
</dbReference>
<dbReference type="RefSeq" id="WP_001295627.1">
    <property type="nucleotide sequence ID" value="NC_008253.1"/>
</dbReference>
<dbReference type="SMR" id="Q0TD62"/>
<dbReference type="GeneID" id="93778954"/>
<dbReference type="KEGG" id="ecp:ECP_3134"/>
<dbReference type="HOGENOM" id="CLU_015114_1_3_6"/>
<dbReference type="Proteomes" id="UP000009182">
    <property type="component" value="Chromosome"/>
</dbReference>
<dbReference type="GO" id="GO:0005886">
    <property type="term" value="C:plasma membrane"/>
    <property type="evidence" value="ECO:0007669"/>
    <property type="project" value="UniProtKB-SubCell"/>
</dbReference>
<dbReference type="GO" id="GO:0046872">
    <property type="term" value="F:metal ion binding"/>
    <property type="evidence" value="ECO:0007669"/>
    <property type="project" value="UniProtKB-KW"/>
</dbReference>
<dbReference type="GO" id="GO:0005385">
    <property type="term" value="F:zinc ion transmembrane transporter activity"/>
    <property type="evidence" value="ECO:0007669"/>
    <property type="project" value="UniProtKB-UniRule"/>
</dbReference>
<dbReference type="HAMAP" id="MF_00548">
    <property type="entry name" value="ZupT"/>
    <property type="match status" value="1"/>
</dbReference>
<dbReference type="InterPro" id="IPR003689">
    <property type="entry name" value="ZIP"/>
</dbReference>
<dbReference type="InterPro" id="IPR023498">
    <property type="entry name" value="Zn_transptr_ZupT"/>
</dbReference>
<dbReference type="NCBIfam" id="NF003243">
    <property type="entry name" value="PRK04201.1"/>
    <property type="match status" value="1"/>
</dbReference>
<dbReference type="PANTHER" id="PTHR11040:SF205">
    <property type="entry name" value="ZINC TRANSPORTER ZUPT"/>
    <property type="match status" value="1"/>
</dbReference>
<dbReference type="PANTHER" id="PTHR11040">
    <property type="entry name" value="ZINC/IRON TRANSPORTER"/>
    <property type="match status" value="1"/>
</dbReference>
<dbReference type="Pfam" id="PF02535">
    <property type="entry name" value="Zip"/>
    <property type="match status" value="2"/>
</dbReference>
<evidence type="ECO:0000255" key="1">
    <source>
        <dbReference type="HAMAP-Rule" id="MF_00548"/>
    </source>
</evidence>
<accession>Q0TD62</accession>
<feature type="chain" id="PRO_1000017774" description="Zinc transporter ZupT">
    <location>
        <begin position="1"/>
        <end position="257"/>
    </location>
</feature>
<feature type="transmembrane region" description="Helical" evidence="1">
    <location>
        <begin position="5"/>
        <end position="25"/>
    </location>
</feature>
<feature type="transmembrane region" description="Helical" evidence="1">
    <location>
        <begin position="32"/>
        <end position="52"/>
    </location>
</feature>
<feature type="transmembrane region" description="Helical" evidence="1">
    <location>
        <begin position="61"/>
        <end position="81"/>
    </location>
</feature>
<feature type="transmembrane region" description="Helical" evidence="1">
    <location>
        <begin position="137"/>
        <end position="157"/>
    </location>
</feature>
<feature type="transmembrane region" description="Helical" evidence="1">
    <location>
        <begin position="171"/>
        <end position="191"/>
    </location>
</feature>
<feature type="transmembrane region" description="Helical" evidence="1">
    <location>
        <begin position="195"/>
        <end position="215"/>
    </location>
</feature>
<feature type="transmembrane region" description="Helical" evidence="1">
    <location>
        <begin position="236"/>
        <end position="256"/>
    </location>
</feature>
<feature type="binding site" description="M2 metal binding site" evidence="1">
    <location>
        <position position="120"/>
    </location>
    <ligand>
        <name>Fe(2+)</name>
        <dbReference type="ChEBI" id="CHEBI:29033"/>
    </ligand>
</feature>
<feature type="binding site" description="M2 metal binding site" evidence="1">
    <location>
        <position position="123"/>
    </location>
    <ligand>
        <name>Fe(2+)</name>
        <dbReference type="ChEBI" id="CHEBI:29033"/>
    </ligand>
</feature>
<feature type="binding site" description="M1 metal binding site" evidence="1">
    <location>
        <position position="123"/>
    </location>
    <ligand>
        <name>Zn(2+)</name>
        <dbReference type="ChEBI" id="CHEBI:29105"/>
    </ligand>
</feature>
<feature type="binding site" description="M1 metal binding site" evidence="1">
    <location>
        <position position="148"/>
    </location>
    <ligand>
        <name>Zn(2+)</name>
        <dbReference type="ChEBI" id="CHEBI:29105"/>
    </ligand>
</feature>
<feature type="binding site" description="M2 metal binding site" evidence="1">
    <location>
        <position position="149"/>
    </location>
    <ligand>
        <name>Fe(2+)</name>
        <dbReference type="ChEBI" id="CHEBI:29033"/>
    </ligand>
</feature>
<feature type="binding site" description="M2 metal binding site" evidence="1">
    <location>
        <position position="152"/>
    </location>
    <ligand>
        <name>Fe(2+)</name>
        <dbReference type="ChEBI" id="CHEBI:29033"/>
    </ligand>
</feature>
<feature type="binding site" description="M1 metal binding site" evidence="1">
    <location>
        <position position="152"/>
    </location>
    <ligand>
        <name>Zn(2+)</name>
        <dbReference type="ChEBI" id="CHEBI:29105"/>
    </ligand>
</feature>
<feature type="binding site" description="M2 metal binding site" evidence="1">
    <location>
        <position position="181"/>
    </location>
    <ligand>
        <name>Fe(2+)</name>
        <dbReference type="ChEBI" id="CHEBI:29033"/>
    </ligand>
</feature>
<keyword id="KW-0997">Cell inner membrane</keyword>
<keyword id="KW-1003">Cell membrane</keyword>
<keyword id="KW-0406">Ion transport</keyword>
<keyword id="KW-0408">Iron</keyword>
<keyword id="KW-0472">Membrane</keyword>
<keyword id="KW-0479">Metal-binding</keyword>
<keyword id="KW-0812">Transmembrane</keyword>
<keyword id="KW-1133">Transmembrane helix</keyword>
<keyword id="KW-0813">Transport</keyword>
<keyword id="KW-0862">Zinc</keyword>
<keyword id="KW-0864">Zinc transport</keyword>